<keyword id="KW-0963">Cytoplasm</keyword>
<keyword id="KW-0238">DNA-binding</keyword>
<keyword id="KW-0677">Repeat</keyword>
<keyword id="KW-0678">Repressor</keyword>
<keyword id="KW-0804">Transcription</keyword>
<keyword id="KW-0805">Transcription regulation</keyword>
<name>MRAZ_SERP5</name>
<reference key="1">
    <citation type="submission" date="2007-09" db="EMBL/GenBank/DDBJ databases">
        <title>Complete sequence of chromosome of Serratia proteamaculans 568.</title>
        <authorList>
            <consortium name="US DOE Joint Genome Institute"/>
            <person name="Copeland A."/>
            <person name="Lucas S."/>
            <person name="Lapidus A."/>
            <person name="Barry K."/>
            <person name="Glavina del Rio T."/>
            <person name="Dalin E."/>
            <person name="Tice H."/>
            <person name="Pitluck S."/>
            <person name="Chain P."/>
            <person name="Malfatti S."/>
            <person name="Shin M."/>
            <person name="Vergez L."/>
            <person name="Schmutz J."/>
            <person name="Larimer F."/>
            <person name="Land M."/>
            <person name="Hauser L."/>
            <person name="Kyrpides N."/>
            <person name="Kim E."/>
            <person name="Taghavi S."/>
            <person name="Newman L."/>
            <person name="Vangronsveld J."/>
            <person name="van der Lelie D."/>
            <person name="Richardson P."/>
        </authorList>
    </citation>
    <scope>NUCLEOTIDE SEQUENCE [LARGE SCALE GENOMIC DNA]</scope>
    <source>
        <strain>568</strain>
    </source>
</reference>
<feature type="chain" id="PRO_1000062927" description="Transcriptional regulator MraZ">
    <location>
        <begin position="1"/>
        <end position="152"/>
    </location>
</feature>
<feature type="domain" description="SpoVT-AbrB 1" evidence="2">
    <location>
        <begin position="5"/>
        <end position="52"/>
    </location>
</feature>
<feature type="domain" description="SpoVT-AbrB 2" evidence="2">
    <location>
        <begin position="81"/>
        <end position="124"/>
    </location>
</feature>
<evidence type="ECO:0000255" key="1">
    <source>
        <dbReference type="HAMAP-Rule" id="MF_01008"/>
    </source>
</evidence>
<evidence type="ECO:0000255" key="2">
    <source>
        <dbReference type="PROSITE-ProRule" id="PRU01076"/>
    </source>
</evidence>
<comment type="function">
    <text evidence="1">Negatively regulates its own expression and that of the subsequent genes in the proximal part of the division and cell wall (dcw) gene cluster. Acts by binding directly to DNA. May also regulate the expression of genes outside the dcw cluster.</text>
</comment>
<comment type="subunit">
    <text evidence="1">Forms oligomers.</text>
</comment>
<comment type="subcellular location">
    <subcellularLocation>
        <location evidence="1">Cytoplasm</location>
        <location evidence="1">Nucleoid</location>
    </subcellularLocation>
</comment>
<comment type="similarity">
    <text evidence="1">Belongs to the MraZ family.</text>
</comment>
<dbReference type="EMBL" id="CP000826">
    <property type="protein sequence ID" value="ABV39858.1"/>
    <property type="molecule type" value="Genomic_DNA"/>
</dbReference>
<dbReference type="SMR" id="A8G9R8"/>
<dbReference type="STRING" id="399741.Spro_0752"/>
<dbReference type="KEGG" id="spe:Spro_0752"/>
<dbReference type="eggNOG" id="COG2001">
    <property type="taxonomic scope" value="Bacteria"/>
</dbReference>
<dbReference type="HOGENOM" id="CLU_107907_2_0_6"/>
<dbReference type="OrthoDB" id="9807753at2"/>
<dbReference type="GO" id="GO:0005737">
    <property type="term" value="C:cytoplasm"/>
    <property type="evidence" value="ECO:0007669"/>
    <property type="project" value="UniProtKB-UniRule"/>
</dbReference>
<dbReference type="GO" id="GO:0009295">
    <property type="term" value="C:nucleoid"/>
    <property type="evidence" value="ECO:0007669"/>
    <property type="project" value="UniProtKB-SubCell"/>
</dbReference>
<dbReference type="GO" id="GO:0003700">
    <property type="term" value="F:DNA-binding transcription factor activity"/>
    <property type="evidence" value="ECO:0007669"/>
    <property type="project" value="UniProtKB-UniRule"/>
</dbReference>
<dbReference type="GO" id="GO:0000976">
    <property type="term" value="F:transcription cis-regulatory region binding"/>
    <property type="evidence" value="ECO:0007669"/>
    <property type="project" value="TreeGrafter"/>
</dbReference>
<dbReference type="GO" id="GO:2000143">
    <property type="term" value="P:negative regulation of DNA-templated transcription initiation"/>
    <property type="evidence" value="ECO:0007669"/>
    <property type="project" value="TreeGrafter"/>
</dbReference>
<dbReference type="CDD" id="cd16321">
    <property type="entry name" value="MraZ_C"/>
    <property type="match status" value="1"/>
</dbReference>
<dbReference type="CDD" id="cd16320">
    <property type="entry name" value="MraZ_N"/>
    <property type="match status" value="1"/>
</dbReference>
<dbReference type="FunFam" id="3.40.1550.20:FF:000001">
    <property type="entry name" value="Transcriptional regulator MraZ"/>
    <property type="match status" value="1"/>
</dbReference>
<dbReference type="Gene3D" id="3.40.1550.20">
    <property type="entry name" value="Transcriptional regulator MraZ domain"/>
    <property type="match status" value="1"/>
</dbReference>
<dbReference type="HAMAP" id="MF_01008">
    <property type="entry name" value="MraZ"/>
    <property type="match status" value="1"/>
</dbReference>
<dbReference type="InterPro" id="IPR003444">
    <property type="entry name" value="MraZ"/>
</dbReference>
<dbReference type="InterPro" id="IPR035644">
    <property type="entry name" value="MraZ_C"/>
</dbReference>
<dbReference type="InterPro" id="IPR020603">
    <property type="entry name" value="MraZ_dom"/>
</dbReference>
<dbReference type="InterPro" id="IPR035642">
    <property type="entry name" value="MraZ_N"/>
</dbReference>
<dbReference type="InterPro" id="IPR038619">
    <property type="entry name" value="MraZ_sf"/>
</dbReference>
<dbReference type="InterPro" id="IPR007159">
    <property type="entry name" value="SpoVT-AbrB_dom"/>
</dbReference>
<dbReference type="InterPro" id="IPR037914">
    <property type="entry name" value="SpoVT-AbrB_sf"/>
</dbReference>
<dbReference type="NCBIfam" id="TIGR00242">
    <property type="entry name" value="division/cell wall cluster transcriptional repressor MraZ"/>
    <property type="match status" value="1"/>
</dbReference>
<dbReference type="PANTHER" id="PTHR34701">
    <property type="entry name" value="TRANSCRIPTIONAL REGULATOR MRAZ"/>
    <property type="match status" value="1"/>
</dbReference>
<dbReference type="PANTHER" id="PTHR34701:SF1">
    <property type="entry name" value="TRANSCRIPTIONAL REGULATOR MRAZ"/>
    <property type="match status" value="1"/>
</dbReference>
<dbReference type="Pfam" id="PF02381">
    <property type="entry name" value="MraZ"/>
    <property type="match status" value="2"/>
</dbReference>
<dbReference type="SUPFAM" id="SSF89447">
    <property type="entry name" value="AbrB/MazE/MraZ-like"/>
    <property type="match status" value="1"/>
</dbReference>
<dbReference type="PROSITE" id="PS51740">
    <property type="entry name" value="SPOVT_ABRB"/>
    <property type="match status" value="2"/>
</dbReference>
<sequence>MFRGATMVNLDSKGRLAVPTRYRELLNEQSEGQMVCTIDLHQPCLLLYPLPEWEIIEQKLSRLSSMNPAERRVQRLLLGHASECQMDSAGRLLLATTLRQHAGLTKEVMLVGQFNKFELWDEQTWYQQVKDDIDAEQSTQEPLSERLQDLSL</sequence>
<proteinExistence type="inferred from homology"/>
<protein>
    <recommendedName>
        <fullName>Transcriptional regulator MraZ</fullName>
    </recommendedName>
</protein>
<organism>
    <name type="scientific">Serratia proteamaculans (strain 568)</name>
    <dbReference type="NCBI Taxonomy" id="399741"/>
    <lineage>
        <taxon>Bacteria</taxon>
        <taxon>Pseudomonadati</taxon>
        <taxon>Pseudomonadota</taxon>
        <taxon>Gammaproteobacteria</taxon>
        <taxon>Enterobacterales</taxon>
        <taxon>Yersiniaceae</taxon>
        <taxon>Serratia</taxon>
    </lineage>
</organism>
<accession>A8G9R8</accession>
<gene>
    <name evidence="1" type="primary">mraZ</name>
    <name type="ordered locus">Spro_0752</name>
</gene>